<sequence length="173" mass="19995">MDITIQHPWFKRALGSLYPSRLFDQFFGEGLFEYDLLPFLSSTISPYYRQSLFRTVLESGISEVRSDRDRFVIYLDVKHFSPEDLTVKVLDDYVEIHGKHSERQDDHGYISREFHRRYRLPSNVDQSAISCSLSADGMLTFSGPKIHSNMESSHSDRSIPVSREEKPTLAPSS</sequence>
<accession>P02503</accession>
<evidence type="ECO:0000250" key="1"/>
<evidence type="ECO:0000250" key="2">
    <source>
        <dbReference type="UniProtKB" id="P02470"/>
    </source>
</evidence>
<evidence type="ECO:0000250" key="3">
    <source>
        <dbReference type="UniProtKB" id="P02489"/>
    </source>
</evidence>
<evidence type="ECO:0000255" key="4">
    <source>
        <dbReference type="PROSITE-ProRule" id="PRU00285"/>
    </source>
</evidence>
<evidence type="ECO:0000256" key="5">
    <source>
        <dbReference type="SAM" id="MobiDB-lite"/>
    </source>
</evidence>
<evidence type="ECO:0000269" key="6">
    <source>
    </source>
</evidence>
<protein>
    <recommendedName>
        <fullName>Alpha-crystallin A chain</fullName>
    </recommendedName>
</protein>
<organism>
    <name type="scientific">Didelphis virginiana</name>
    <name type="common">North American opossum</name>
    <name type="synonym">Didelphis marsupialis virginiana</name>
    <dbReference type="NCBI Taxonomy" id="9267"/>
    <lineage>
        <taxon>Eukaryota</taxon>
        <taxon>Metazoa</taxon>
        <taxon>Chordata</taxon>
        <taxon>Craniata</taxon>
        <taxon>Vertebrata</taxon>
        <taxon>Euteleostomi</taxon>
        <taxon>Mammalia</taxon>
        <taxon>Metatheria</taxon>
        <taxon>Didelphimorphia</taxon>
        <taxon>Didelphidae</taxon>
        <taxon>Didelphis</taxon>
    </lineage>
</organism>
<keyword id="KW-0007">Acetylation</keyword>
<keyword id="KW-0143">Chaperone</keyword>
<keyword id="KW-0963">Cytoplasm</keyword>
<keyword id="KW-0903">Direct protein sequencing</keyword>
<keyword id="KW-0273">Eye lens protein</keyword>
<keyword id="KW-0325">Glycoprotein</keyword>
<keyword id="KW-0479">Metal-binding</keyword>
<keyword id="KW-0488">Methylation</keyword>
<keyword id="KW-0539">Nucleus</keyword>
<keyword id="KW-0597">Phosphoprotein</keyword>
<keyword id="KW-0862">Zinc</keyword>
<reference key="1">
    <citation type="journal article" date="1976" name="Eur. J. Biochem.">
        <title>The amino-acid sequence of the alpha-crystallin A chains of red kangaroo and Virginia opossum.</title>
        <authorList>
            <person name="de Jong W.W."/>
            <person name="Terwindt E.C."/>
        </authorList>
    </citation>
    <scope>PROTEIN SEQUENCE</scope>
    <scope>ACETYLATION AT MET-1</scope>
</reference>
<gene>
    <name type="primary">CRYAA</name>
</gene>
<feature type="chain" id="PRO_0000125855" description="Alpha-crystallin A chain">
    <location>
        <begin position="1"/>
        <end position="173"/>
    </location>
</feature>
<feature type="domain" description="sHSP" evidence="4">
    <location>
        <begin position="52"/>
        <end position="164"/>
    </location>
</feature>
<feature type="region of interest" description="Required for complex formation with BFSP1 and BFSP2" evidence="3">
    <location>
        <begin position="1"/>
        <end position="63"/>
    </location>
</feature>
<feature type="region of interest" description="Disordered" evidence="5">
    <location>
        <begin position="144"/>
        <end position="173"/>
    </location>
</feature>
<feature type="compositionally biased region" description="Basic and acidic residues" evidence="5">
    <location>
        <begin position="153"/>
        <end position="167"/>
    </location>
</feature>
<feature type="binding site" evidence="2">
    <location>
        <position position="100"/>
    </location>
    <ligand>
        <name>Zn(2+)</name>
        <dbReference type="ChEBI" id="CHEBI:29105"/>
        <label>1</label>
    </ligand>
</feature>
<feature type="binding site" evidence="2">
    <location>
        <position position="102"/>
    </location>
    <ligand>
        <name>Zn(2+)</name>
        <dbReference type="ChEBI" id="CHEBI:29105"/>
        <label>1</label>
    </ligand>
</feature>
<feature type="binding site" evidence="2">
    <location>
        <position position="107"/>
    </location>
    <ligand>
        <name>Zn(2+)</name>
        <dbReference type="ChEBI" id="CHEBI:29105"/>
        <label>2</label>
    </ligand>
</feature>
<feature type="binding site" evidence="2">
    <location>
        <position position="154"/>
    </location>
    <ligand>
        <name>Zn(2+)</name>
        <dbReference type="ChEBI" id="CHEBI:29105"/>
        <label>3</label>
    </ligand>
</feature>
<feature type="modified residue" description="N-acetylmethionine" evidence="6">
    <location>
        <position position="1"/>
    </location>
</feature>
<feature type="modified residue" description="Deamidated glutamine; partial" evidence="1">
    <location>
        <position position="6"/>
    </location>
</feature>
<feature type="modified residue" description="Phosphoserine" evidence="3">
    <location>
        <position position="45"/>
    </location>
</feature>
<feature type="modified residue" description="Deamidated glutamine; partial" evidence="1">
    <location>
        <position position="50"/>
    </location>
</feature>
<feature type="modified residue" description="N6-acetyllysine" evidence="3">
    <location>
        <position position="99"/>
    </location>
</feature>
<feature type="modified residue" description="Phosphoserine" evidence="2">
    <location>
        <position position="122"/>
    </location>
</feature>
<feature type="modified residue" description="Deamidated asparagine; partial" evidence="1">
    <location>
        <position position="123"/>
    </location>
</feature>
<feature type="glycosylation site" description="O-linked (GlcNAc) serine" evidence="1">
    <location>
        <position position="162"/>
    </location>
</feature>
<dbReference type="PIR" id="A02906">
    <property type="entry name" value="CYOPAA"/>
</dbReference>
<dbReference type="SMR" id="P02503"/>
<dbReference type="GlyCosmos" id="P02503">
    <property type="glycosylation" value="1 site, No reported glycans"/>
</dbReference>
<dbReference type="iPTMnet" id="P02503"/>
<dbReference type="GO" id="GO:0005737">
    <property type="term" value="C:cytoplasm"/>
    <property type="evidence" value="ECO:0000250"/>
    <property type="project" value="UniProtKB"/>
</dbReference>
<dbReference type="GO" id="GO:0005634">
    <property type="term" value="C:nucleus"/>
    <property type="evidence" value="ECO:0000250"/>
    <property type="project" value="UniProtKB"/>
</dbReference>
<dbReference type="GO" id="GO:0046872">
    <property type="term" value="F:metal ion binding"/>
    <property type="evidence" value="ECO:0007669"/>
    <property type="project" value="UniProtKB-KW"/>
</dbReference>
<dbReference type="GO" id="GO:0005212">
    <property type="term" value="F:structural constituent of eye lens"/>
    <property type="evidence" value="ECO:0007669"/>
    <property type="project" value="UniProtKB-KW"/>
</dbReference>
<dbReference type="GO" id="GO:0051082">
    <property type="term" value="F:unfolded protein binding"/>
    <property type="evidence" value="ECO:0007669"/>
    <property type="project" value="TreeGrafter"/>
</dbReference>
<dbReference type="GO" id="GO:0002088">
    <property type="term" value="P:lens development in camera-type eye"/>
    <property type="evidence" value="ECO:0007669"/>
    <property type="project" value="TreeGrafter"/>
</dbReference>
<dbReference type="GO" id="GO:0043066">
    <property type="term" value="P:negative regulation of apoptotic process"/>
    <property type="evidence" value="ECO:0007669"/>
    <property type="project" value="TreeGrafter"/>
</dbReference>
<dbReference type="GO" id="GO:0042026">
    <property type="term" value="P:protein refolding"/>
    <property type="evidence" value="ECO:0007669"/>
    <property type="project" value="TreeGrafter"/>
</dbReference>
<dbReference type="GO" id="GO:0009408">
    <property type="term" value="P:response to heat"/>
    <property type="evidence" value="ECO:0007669"/>
    <property type="project" value="TreeGrafter"/>
</dbReference>
<dbReference type="CDD" id="cd06497">
    <property type="entry name" value="ACD_alphaA-crystallin_HspB4"/>
    <property type="match status" value="1"/>
</dbReference>
<dbReference type="FunFam" id="2.60.40.790:FF:000008">
    <property type="entry name" value="Alpha-crystallin A chain"/>
    <property type="match status" value="1"/>
</dbReference>
<dbReference type="Gene3D" id="2.60.40.790">
    <property type="match status" value="1"/>
</dbReference>
<dbReference type="InterPro" id="IPR002068">
    <property type="entry name" value="A-crystallin/Hsp20_dom"/>
</dbReference>
<dbReference type="InterPro" id="IPR055269">
    <property type="entry name" value="Alpha-crystallin/HSP_16"/>
</dbReference>
<dbReference type="InterPro" id="IPR001436">
    <property type="entry name" value="Alpha-crystallin/sHSP_animal"/>
</dbReference>
<dbReference type="InterPro" id="IPR003090">
    <property type="entry name" value="Alpha-crystallin_N"/>
</dbReference>
<dbReference type="InterPro" id="IPR008978">
    <property type="entry name" value="HSP20-like_chaperone"/>
</dbReference>
<dbReference type="PANTHER" id="PTHR45640:SF14">
    <property type="entry name" value="ALPHA-CRYSTALLIN A CHAIN"/>
    <property type="match status" value="1"/>
</dbReference>
<dbReference type="PANTHER" id="PTHR45640">
    <property type="entry name" value="HEAT SHOCK PROTEIN HSP-12.2-RELATED"/>
    <property type="match status" value="1"/>
</dbReference>
<dbReference type="Pfam" id="PF00525">
    <property type="entry name" value="Crystallin"/>
    <property type="match status" value="1"/>
</dbReference>
<dbReference type="Pfam" id="PF00011">
    <property type="entry name" value="HSP20"/>
    <property type="match status" value="1"/>
</dbReference>
<dbReference type="PIRSF" id="PIRSF036514">
    <property type="entry name" value="Sm_HSP_B1"/>
    <property type="match status" value="1"/>
</dbReference>
<dbReference type="PRINTS" id="PR00299">
    <property type="entry name" value="ACRYSTALLIN"/>
</dbReference>
<dbReference type="SUPFAM" id="SSF49764">
    <property type="entry name" value="HSP20-like chaperones"/>
    <property type="match status" value="1"/>
</dbReference>
<dbReference type="PROSITE" id="PS01031">
    <property type="entry name" value="SHSP"/>
    <property type="match status" value="1"/>
</dbReference>
<proteinExistence type="evidence at protein level"/>
<name>CRYAA_DIDVI</name>
<comment type="function">
    <text evidence="3">Contributes to the transparency and refractive index of the lens. Acts as a chaperone, preventing aggregation of various proteins under a wide range of stress conditions. Required for the correct formation of lens intermediate filaments as part of a complex composed of BFSP1, BFSP2 and CRYAA.</text>
</comment>
<comment type="subunit">
    <text evidence="2 3">Heteromer composed of three CRYAA and one CRYAB subunits. Inter-subunit bridging via zinc ions enhances stability, which is crucial as there is no protein turn over in the lens. Can also form homodimers and homotetramers (dimers of dimers) which serve as the building blocks of homooligomers (By similarity). Within homooligomers, the zinc-binding motif is created from residues of 3 different molecules. His-100 and Glu-102 from one molecule are ligands of the zinc ion, and His-107 and His-154 residues from additional molecules complete the site with tetrahedral coordination geometry (By similarity). Part of a complex required for lens intermediate filament formation composed of BFSP1, BFSP2 and CRYAA (By similarity).</text>
</comment>
<comment type="subcellular location">
    <subcellularLocation>
        <location evidence="3">Cytoplasm</location>
    </subcellularLocation>
    <subcellularLocation>
        <location evidence="3">Nucleus</location>
    </subcellularLocation>
    <text evidence="3">Translocates to the nucleus during heat shock and resides in sub-nuclear structures known as SC35 speckles or nuclear splicing speckles.</text>
</comment>
<comment type="PTM">
    <text evidence="3">Acetylation at Lys-99 may increase chaperone activity.</text>
</comment>
<comment type="PTM">
    <text evidence="3">Undergoes age-dependent proteolytical cleavage at the C-terminus.</text>
</comment>
<comment type="similarity">
    <text evidence="4">Belongs to the small heat shock protein (HSP20) family.</text>
</comment>